<sequence>MPRSLKKGPFIDLHLLKKVEKAVESGDKKPLRTWSRRSTIFPNMIGLTIAVHNGRQHVPVFVSDEMVGHKLGEFAPTRTYRGHAADKKAKKK</sequence>
<accession>B4TKL1</accession>
<name>RS19_SALHS</name>
<reference key="1">
    <citation type="journal article" date="2011" name="J. Bacteriol.">
        <title>Comparative genomics of 28 Salmonella enterica isolates: evidence for CRISPR-mediated adaptive sublineage evolution.</title>
        <authorList>
            <person name="Fricke W.F."/>
            <person name="Mammel M.K."/>
            <person name="McDermott P.F."/>
            <person name="Tartera C."/>
            <person name="White D.G."/>
            <person name="Leclerc J.E."/>
            <person name="Ravel J."/>
            <person name="Cebula T.A."/>
        </authorList>
    </citation>
    <scope>NUCLEOTIDE SEQUENCE [LARGE SCALE GENOMIC DNA]</scope>
    <source>
        <strain>SL476</strain>
    </source>
</reference>
<keyword id="KW-0687">Ribonucleoprotein</keyword>
<keyword id="KW-0689">Ribosomal protein</keyword>
<keyword id="KW-0694">RNA-binding</keyword>
<keyword id="KW-0699">rRNA-binding</keyword>
<protein>
    <recommendedName>
        <fullName evidence="1">Small ribosomal subunit protein uS19</fullName>
    </recommendedName>
    <alternativeName>
        <fullName evidence="2">30S ribosomal protein S19</fullName>
    </alternativeName>
</protein>
<proteinExistence type="inferred from homology"/>
<comment type="function">
    <text evidence="1">Protein S19 forms a complex with S13 that binds strongly to the 16S ribosomal RNA.</text>
</comment>
<comment type="similarity">
    <text evidence="1">Belongs to the universal ribosomal protein uS19 family.</text>
</comment>
<evidence type="ECO:0000255" key="1">
    <source>
        <dbReference type="HAMAP-Rule" id="MF_00531"/>
    </source>
</evidence>
<evidence type="ECO:0000305" key="2"/>
<gene>
    <name evidence="1" type="primary">rpsS</name>
    <name type="ordered locus">SeHA_C3740</name>
</gene>
<dbReference type="EMBL" id="CP001120">
    <property type="protein sequence ID" value="ACF69069.1"/>
    <property type="molecule type" value="Genomic_DNA"/>
</dbReference>
<dbReference type="RefSeq" id="WP_001138115.1">
    <property type="nucleotide sequence ID" value="NC_011083.1"/>
</dbReference>
<dbReference type="SMR" id="B4TKL1"/>
<dbReference type="GeneID" id="97603665"/>
<dbReference type="KEGG" id="seh:SeHA_C3740"/>
<dbReference type="HOGENOM" id="CLU_144911_0_1_6"/>
<dbReference type="Proteomes" id="UP000001866">
    <property type="component" value="Chromosome"/>
</dbReference>
<dbReference type="GO" id="GO:0005737">
    <property type="term" value="C:cytoplasm"/>
    <property type="evidence" value="ECO:0007669"/>
    <property type="project" value="UniProtKB-ARBA"/>
</dbReference>
<dbReference type="GO" id="GO:0015935">
    <property type="term" value="C:small ribosomal subunit"/>
    <property type="evidence" value="ECO:0007669"/>
    <property type="project" value="InterPro"/>
</dbReference>
<dbReference type="GO" id="GO:0019843">
    <property type="term" value="F:rRNA binding"/>
    <property type="evidence" value="ECO:0007669"/>
    <property type="project" value="UniProtKB-UniRule"/>
</dbReference>
<dbReference type="GO" id="GO:0003735">
    <property type="term" value="F:structural constituent of ribosome"/>
    <property type="evidence" value="ECO:0007669"/>
    <property type="project" value="InterPro"/>
</dbReference>
<dbReference type="GO" id="GO:0000028">
    <property type="term" value="P:ribosomal small subunit assembly"/>
    <property type="evidence" value="ECO:0007669"/>
    <property type="project" value="TreeGrafter"/>
</dbReference>
<dbReference type="GO" id="GO:0006412">
    <property type="term" value="P:translation"/>
    <property type="evidence" value="ECO:0007669"/>
    <property type="project" value="UniProtKB-UniRule"/>
</dbReference>
<dbReference type="FunFam" id="3.30.860.10:FF:000001">
    <property type="entry name" value="30S ribosomal protein S19"/>
    <property type="match status" value="1"/>
</dbReference>
<dbReference type="Gene3D" id="3.30.860.10">
    <property type="entry name" value="30s Ribosomal Protein S19, Chain A"/>
    <property type="match status" value="1"/>
</dbReference>
<dbReference type="HAMAP" id="MF_00531">
    <property type="entry name" value="Ribosomal_uS19"/>
    <property type="match status" value="1"/>
</dbReference>
<dbReference type="InterPro" id="IPR002222">
    <property type="entry name" value="Ribosomal_uS19"/>
</dbReference>
<dbReference type="InterPro" id="IPR005732">
    <property type="entry name" value="Ribosomal_uS19_bac-type"/>
</dbReference>
<dbReference type="InterPro" id="IPR020934">
    <property type="entry name" value="Ribosomal_uS19_CS"/>
</dbReference>
<dbReference type="InterPro" id="IPR023575">
    <property type="entry name" value="Ribosomal_uS19_SF"/>
</dbReference>
<dbReference type="NCBIfam" id="TIGR01050">
    <property type="entry name" value="rpsS_bact"/>
    <property type="match status" value="1"/>
</dbReference>
<dbReference type="PANTHER" id="PTHR11880">
    <property type="entry name" value="RIBOSOMAL PROTEIN S19P FAMILY MEMBER"/>
    <property type="match status" value="1"/>
</dbReference>
<dbReference type="PANTHER" id="PTHR11880:SF8">
    <property type="entry name" value="SMALL RIBOSOMAL SUBUNIT PROTEIN US19M"/>
    <property type="match status" value="1"/>
</dbReference>
<dbReference type="Pfam" id="PF00203">
    <property type="entry name" value="Ribosomal_S19"/>
    <property type="match status" value="1"/>
</dbReference>
<dbReference type="PIRSF" id="PIRSF002144">
    <property type="entry name" value="Ribosomal_S19"/>
    <property type="match status" value="1"/>
</dbReference>
<dbReference type="PRINTS" id="PR00975">
    <property type="entry name" value="RIBOSOMALS19"/>
</dbReference>
<dbReference type="SUPFAM" id="SSF54570">
    <property type="entry name" value="Ribosomal protein S19"/>
    <property type="match status" value="1"/>
</dbReference>
<dbReference type="PROSITE" id="PS00323">
    <property type="entry name" value="RIBOSOMAL_S19"/>
    <property type="match status" value="1"/>
</dbReference>
<organism>
    <name type="scientific">Salmonella heidelberg (strain SL476)</name>
    <dbReference type="NCBI Taxonomy" id="454169"/>
    <lineage>
        <taxon>Bacteria</taxon>
        <taxon>Pseudomonadati</taxon>
        <taxon>Pseudomonadota</taxon>
        <taxon>Gammaproteobacteria</taxon>
        <taxon>Enterobacterales</taxon>
        <taxon>Enterobacteriaceae</taxon>
        <taxon>Salmonella</taxon>
    </lineage>
</organism>
<feature type="chain" id="PRO_1000128032" description="Small ribosomal subunit protein uS19">
    <location>
        <begin position="1"/>
        <end position="92"/>
    </location>
</feature>